<organism>
    <name type="scientific">Pyrobaculum islandicum (strain DSM 4184 / JCM 9189 / GEO3)</name>
    <dbReference type="NCBI Taxonomy" id="384616"/>
    <lineage>
        <taxon>Archaea</taxon>
        <taxon>Thermoproteota</taxon>
        <taxon>Thermoprotei</taxon>
        <taxon>Thermoproteales</taxon>
        <taxon>Thermoproteaceae</taxon>
        <taxon>Pyrobaculum</taxon>
    </lineage>
</organism>
<sequence>MGALTIVAKYMIVAQIEVNGSVDKSDIIGALFSQTEGLLGKDMDLRELQMMGRIGRIEVEISEKNSKTKARIYIPSNLDRYETALVAALIESVERVGPYLASVKVLEIKDLREEKRRKIIERAKELVKLIEEEILPDTKEIIERLKEDVAKAEIIEYGPEKLPAGPDVDKSDSIIVVEGRADVVNLVKHGYRNVIAIEGISKGVPQTIIDLSKKKSVTVFIDGDKGGEIVLRELIKVAHIDYIARAPPGKEVEQLTAKEIAKALRNKITLEEWLAQQKAAGEKTESQMSPQQPQLTQTQPTTAEVQAPFDLSKKIEEMLGTLEAEIYDANWTLLKRLPVRELPDFLANSNDSIYAVVMDGIVTQRIVDLATKRGVKVIITARVGPLTKVPEDMKIVTFDQITQKT</sequence>
<name>DNAG_PYRIL</name>
<reference key="1">
    <citation type="submission" date="2006-12" db="EMBL/GenBank/DDBJ databases">
        <title>Complete sequence of Pyrobaculum islandicum DSM 4184.</title>
        <authorList>
            <person name="Copeland A."/>
            <person name="Lucas S."/>
            <person name="Lapidus A."/>
            <person name="Barry K."/>
            <person name="Detter J.C."/>
            <person name="Glavina del Rio T."/>
            <person name="Dalin E."/>
            <person name="Tice H."/>
            <person name="Pitluck S."/>
            <person name="Meincke L."/>
            <person name="Brettin T."/>
            <person name="Bruce D."/>
            <person name="Han C."/>
            <person name="Tapia R."/>
            <person name="Gilna P."/>
            <person name="Schmutz J."/>
            <person name="Larimer F."/>
            <person name="Land M."/>
            <person name="Hauser L."/>
            <person name="Kyrpides N."/>
            <person name="Mikhailova N."/>
            <person name="Cozen A.E."/>
            <person name="Fitz-Gibbon S.T."/>
            <person name="House C.H."/>
            <person name="Saltikov C."/>
            <person name="Lowe T."/>
            <person name="Richardson P."/>
        </authorList>
    </citation>
    <scope>NUCLEOTIDE SEQUENCE [LARGE SCALE GENOMIC DNA]</scope>
    <source>
        <strain>DSM 4184 / JCM 9189 / GEO3</strain>
    </source>
</reference>
<gene>
    <name evidence="1" type="primary">dnaG</name>
    <name type="ordered locus">Pisl_0960</name>
</gene>
<feature type="chain" id="PRO_1000000566" description="DNA primase DnaG">
    <location>
        <begin position="1"/>
        <end position="405"/>
    </location>
</feature>
<feature type="domain" description="Toprim" evidence="1">
    <location>
        <begin position="172"/>
        <end position="248"/>
    </location>
</feature>
<feature type="region of interest" description="Disordered" evidence="2">
    <location>
        <begin position="279"/>
        <end position="302"/>
    </location>
</feature>
<feature type="compositionally biased region" description="Low complexity" evidence="2">
    <location>
        <begin position="290"/>
        <end position="302"/>
    </location>
</feature>
<feature type="binding site" evidence="1">
    <location>
        <position position="178"/>
    </location>
    <ligand>
        <name>Mg(2+)</name>
        <dbReference type="ChEBI" id="CHEBI:18420"/>
        <label>1</label>
        <note>catalytic</note>
    </ligand>
</feature>
<feature type="binding site" evidence="1">
    <location>
        <position position="222"/>
    </location>
    <ligand>
        <name>Mg(2+)</name>
        <dbReference type="ChEBI" id="CHEBI:18420"/>
        <label>1</label>
        <note>catalytic</note>
    </ligand>
</feature>
<feature type="binding site" evidence="1">
    <location>
        <position position="222"/>
    </location>
    <ligand>
        <name>Mg(2+)</name>
        <dbReference type="ChEBI" id="CHEBI:18420"/>
        <label>2</label>
    </ligand>
</feature>
<feature type="binding site" evidence="1">
    <location>
        <position position="224"/>
    </location>
    <ligand>
        <name>Mg(2+)</name>
        <dbReference type="ChEBI" id="CHEBI:18420"/>
        <label>2</label>
    </ligand>
</feature>
<keyword id="KW-0235">DNA replication</keyword>
<keyword id="KW-0240">DNA-directed RNA polymerase</keyword>
<keyword id="KW-0271">Exosome</keyword>
<keyword id="KW-0460">Magnesium</keyword>
<keyword id="KW-0479">Metal-binding</keyword>
<keyword id="KW-0548">Nucleotidyltransferase</keyword>
<keyword id="KW-0639">Primosome</keyword>
<keyword id="KW-0804">Transcription</keyword>
<keyword id="KW-0808">Transferase</keyword>
<dbReference type="EC" id="2.7.7.101" evidence="1"/>
<dbReference type="EMBL" id="CP000504">
    <property type="protein sequence ID" value="ABL88136.1"/>
    <property type="molecule type" value="Genomic_DNA"/>
</dbReference>
<dbReference type="RefSeq" id="WP_011762711.1">
    <property type="nucleotide sequence ID" value="NC_008701.1"/>
</dbReference>
<dbReference type="STRING" id="384616.Pisl_0960"/>
<dbReference type="GeneID" id="4616685"/>
<dbReference type="KEGG" id="pis:Pisl_0960"/>
<dbReference type="eggNOG" id="arCOG04281">
    <property type="taxonomic scope" value="Archaea"/>
</dbReference>
<dbReference type="HOGENOM" id="CLU_034626_0_0_2"/>
<dbReference type="OrthoDB" id="8643at2157"/>
<dbReference type="Proteomes" id="UP000002595">
    <property type="component" value="Chromosome"/>
</dbReference>
<dbReference type="GO" id="GO:0005737">
    <property type="term" value="C:cytoplasm"/>
    <property type="evidence" value="ECO:0007669"/>
    <property type="project" value="TreeGrafter"/>
</dbReference>
<dbReference type="GO" id="GO:0000428">
    <property type="term" value="C:DNA-directed RNA polymerase complex"/>
    <property type="evidence" value="ECO:0007669"/>
    <property type="project" value="UniProtKB-KW"/>
</dbReference>
<dbReference type="GO" id="GO:0000178">
    <property type="term" value="C:exosome (RNase complex)"/>
    <property type="evidence" value="ECO:0007669"/>
    <property type="project" value="UniProtKB-KW"/>
</dbReference>
<dbReference type="GO" id="GO:1990077">
    <property type="term" value="C:primosome complex"/>
    <property type="evidence" value="ECO:0007669"/>
    <property type="project" value="UniProtKB-KW"/>
</dbReference>
<dbReference type="GO" id="GO:0003899">
    <property type="term" value="F:DNA-directed RNA polymerase activity"/>
    <property type="evidence" value="ECO:0007669"/>
    <property type="project" value="InterPro"/>
</dbReference>
<dbReference type="GO" id="GO:0046872">
    <property type="term" value="F:metal ion binding"/>
    <property type="evidence" value="ECO:0007669"/>
    <property type="project" value="UniProtKB-KW"/>
</dbReference>
<dbReference type="GO" id="GO:0008143">
    <property type="term" value="F:poly(A) binding"/>
    <property type="evidence" value="ECO:0007669"/>
    <property type="project" value="InterPro"/>
</dbReference>
<dbReference type="GO" id="GO:0006269">
    <property type="term" value="P:DNA replication, synthesis of primer"/>
    <property type="evidence" value="ECO:0007669"/>
    <property type="project" value="UniProtKB-UniRule"/>
</dbReference>
<dbReference type="CDD" id="cd01029">
    <property type="entry name" value="TOPRIM_primases"/>
    <property type="match status" value="1"/>
</dbReference>
<dbReference type="FunFam" id="3.40.1360.10:FF:000010">
    <property type="entry name" value="DNA primase DnaG"/>
    <property type="match status" value="1"/>
</dbReference>
<dbReference type="Gene3D" id="3.40.1360.10">
    <property type="match status" value="1"/>
</dbReference>
<dbReference type="HAMAP" id="MF_00007">
    <property type="entry name" value="DNA_primase_DnaG_arc"/>
    <property type="match status" value="1"/>
</dbReference>
<dbReference type="InterPro" id="IPR050219">
    <property type="entry name" value="DnaG_primase"/>
</dbReference>
<dbReference type="InterPro" id="IPR020607">
    <property type="entry name" value="Primase_DnaG_arc"/>
</dbReference>
<dbReference type="InterPro" id="IPR034154">
    <property type="entry name" value="TOPRIM_DnaG/twinkle"/>
</dbReference>
<dbReference type="InterPro" id="IPR006171">
    <property type="entry name" value="TOPRIM_dom"/>
</dbReference>
<dbReference type="NCBIfam" id="NF003108">
    <property type="entry name" value="PRK04031.1-1"/>
    <property type="match status" value="1"/>
</dbReference>
<dbReference type="PANTHER" id="PTHR30313">
    <property type="entry name" value="DNA PRIMASE"/>
    <property type="match status" value="1"/>
</dbReference>
<dbReference type="PANTHER" id="PTHR30313:SF2">
    <property type="entry name" value="DNA PRIMASE"/>
    <property type="match status" value="1"/>
</dbReference>
<dbReference type="Pfam" id="PF13662">
    <property type="entry name" value="Toprim_4"/>
    <property type="match status" value="1"/>
</dbReference>
<dbReference type="SMART" id="SM00493">
    <property type="entry name" value="TOPRIM"/>
    <property type="match status" value="1"/>
</dbReference>
<dbReference type="SUPFAM" id="SSF56731">
    <property type="entry name" value="DNA primase core"/>
    <property type="match status" value="1"/>
</dbReference>
<dbReference type="PROSITE" id="PS50880">
    <property type="entry name" value="TOPRIM"/>
    <property type="match status" value="1"/>
</dbReference>
<proteinExistence type="inferred from homology"/>
<protein>
    <recommendedName>
        <fullName evidence="1">DNA primase DnaG</fullName>
        <ecNumber evidence="1">2.7.7.101</ecNumber>
    </recommendedName>
</protein>
<accession>A1RT54</accession>
<comment type="function">
    <text evidence="1">RNA polymerase that catalyzes the synthesis of short RNA molecules used as primers for DNA polymerase during DNA replication. Also part of the exosome, which is a complex involved in RNA degradation. Acts as a poly(A)-binding protein that enhances the interaction between heteromeric, adenine-rich transcripts and the exosome.</text>
</comment>
<comment type="catalytic activity">
    <reaction evidence="1">
        <text>ssDNA + n NTP = ssDNA/pppN(pN)n-1 hybrid + (n-1) diphosphate.</text>
        <dbReference type="EC" id="2.7.7.101"/>
    </reaction>
</comment>
<comment type="cofactor">
    <cofactor evidence="1">
        <name>Mg(2+)</name>
        <dbReference type="ChEBI" id="CHEBI:18420"/>
    </cofactor>
    <text evidence="1">Binds two Mg(2+) per subunit.</text>
</comment>
<comment type="subunit">
    <text evidence="1">Forms a ternary complex with MCM helicase and DNA. Component of the archaeal exosome complex.</text>
</comment>
<comment type="similarity">
    <text evidence="1">Belongs to the archaeal DnaG primase family.</text>
</comment>
<evidence type="ECO:0000255" key="1">
    <source>
        <dbReference type="HAMAP-Rule" id="MF_00007"/>
    </source>
</evidence>
<evidence type="ECO:0000256" key="2">
    <source>
        <dbReference type="SAM" id="MobiDB-lite"/>
    </source>
</evidence>